<sequence length="351" mass="37184">MTRLYLQDVTLRDGMHAIAHRYTADQVRTIAAALDAAGIAAIEVAHGDGLAGSSVNYGHGAASDADWIAAAAEVLTTARLTTLLVPGIGTIADLRAARELGVTSVRIATHCTEADISAQHISWARENGMDVSGFLMMSHMNDPAGLAAQAKLMESYGAHCVYVTDSGGRLLMSDVAERVDAYRQVLEPETQIGIHAHHNLSLGVANSVIAVEHGRILGDGPLGAPAGRTVRVDASLAGQGAGAGNAPLEVFVAVAELHGWEHGCDVFALMDAAEDLVRPLQDRPVRVDRETLSLGYAGVYSSFLRHAERAAERYGVDVRSILIELGRRRMVGGQEDMIVDVALDLAGREKT</sequence>
<dbReference type="EC" id="4.1.3.39" evidence="1"/>
<dbReference type="EMBL" id="CP000850">
    <property type="protein sequence ID" value="ABV99691.1"/>
    <property type="molecule type" value="Genomic_DNA"/>
</dbReference>
<dbReference type="SMR" id="A8M1N0"/>
<dbReference type="STRING" id="391037.Sare_3900"/>
<dbReference type="KEGG" id="saq:Sare_3900"/>
<dbReference type="PATRIC" id="fig|391037.6.peg.3932"/>
<dbReference type="eggNOG" id="COG0119">
    <property type="taxonomic scope" value="Bacteria"/>
</dbReference>
<dbReference type="HOGENOM" id="CLU_049173_0_0_11"/>
<dbReference type="OrthoDB" id="9803573at2"/>
<dbReference type="GO" id="GO:0003852">
    <property type="term" value="F:2-isopropylmalate synthase activity"/>
    <property type="evidence" value="ECO:0007669"/>
    <property type="project" value="TreeGrafter"/>
</dbReference>
<dbReference type="GO" id="GO:0008701">
    <property type="term" value="F:4-hydroxy-2-oxovalerate aldolase activity"/>
    <property type="evidence" value="ECO:0007669"/>
    <property type="project" value="UniProtKB-UniRule"/>
</dbReference>
<dbReference type="GO" id="GO:0030145">
    <property type="term" value="F:manganese ion binding"/>
    <property type="evidence" value="ECO:0007669"/>
    <property type="project" value="UniProtKB-UniRule"/>
</dbReference>
<dbReference type="GO" id="GO:0009056">
    <property type="term" value="P:catabolic process"/>
    <property type="evidence" value="ECO:0007669"/>
    <property type="project" value="UniProtKB-KW"/>
</dbReference>
<dbReference type="GO" id="GO:0009098">
    <property type="term" value="P:L-leucine biosynthetic process"/>
    <property type="evidence" value="ECO:0007669"/>
    <property type="project" value="TreeGrafter"/>
</dbReference>
<dbReference type="CDD" id="cd07943">
    <property type="entry name" value="DRE_TIM_HOA"/>
    <property type="match status" value="1"/>
</dbReference>
<dbReference type="Gene3D" id="1.10.8.60">
    <property type="match status" value="1"/>
</dbReference>
<dbReference type="Gene3D" id="3.20.20.70">
    <property type="entry name" value="Aldolase class I"/>
    <property type="match status" value="1"/>
</dbReference>
<dbReference type="HAMAP" id="MF_01656">
    <property type="entry name" value="HOA"/>
    <property type="match status" value="1"/>
</dbReference>
<dbReference type="InterPro" id="IPR050073">
    <property type="entry name" value="2-IPM_HCS-like"/>
</dbReference>
<dbReference type="InterPro" id="IPR017629">
    <property type="entry name" value="4OH_2_O-val_aldolase"/>
</dbReference>
<dbReference type="InterPro" id="IPR013785">
    <property type="entry name" value="Aldolase_TIM"/>
</dbReference>
<dbReference type="InterPro" id="IPR012425">
    <property type="entry name" value="DmpG_comm"/>
</dbReference>
<dbReference type="InterPro" id="IPR035685">
    <property type="entry name" value="DRE_TIM_HOA"/>
</dbReference>
<dbReference type="InterPro" id="IPR000891">
    <property type="entry name" value="PYR_CT"/>
</dbReference>
<dbReference type="NCBIfam" id="TIGR03217">
    <property type="entry name" value="4OH_2_O_val_ald"/>
    <property type="match status" value="1"/>
</dbReference>
<dbReference type="NCBIfam" id="NF006049">
    <property type="entry name" value="PRK08195.1"/>
    <property type="match status" value="1"/>
</dbReference>
<dbReference type="PANTHER" id="PTHR10277:SF9">
    <property type="entry name" value="2-ISOPROPYLMALATE SYNTHASE 1, CHLOROPLASTIC-RELATED"/>
    <property type="match status" value="1"/>
</dbReference>
<dbReference type="PANTHER" id="PTHR10277">
    <property type="entry name" value="HOMOCITRATE SYNTHASE-RELATED"/>
    <property type="match status" value="1"/>
</dbReference>
<dbReference type="Pfam" id="PF07836">
    <property type="entry name" value="DmpG_comm"/>
    <property type="match status" value="1"/>
</dbReference>
<dbReference type="Pfam" id="PF00682">
    <property type="entry name" value="HMGL-like"/>
    <property type="match status" value="1"/>
</dbReference>
<dbReference type="SUPFAM" id="SSF51569">
    <property type="entry name" value="Aldolase"/>
    <property type="match status" value="1"/>
</dbReference>
<dbReference type="SUPFAM" id="SSF89000">
    <property type="entry name" value="post-HMGL domain-like"/>
    <property type="match status" value="1"/>
</dbReference>
<dbReference type="PROSITE" id="PS50991">
    <property type="entry name" value="PYR_CT"/>
    <property type="match status" value="1"/>
</dbReference>
<keyword id="KW-0058">Aromatic hydrocarbons catabolism</keyword>
<keyword id="KW-0456">Lyase</keyword>
<keyword id="KW-0464">Manganese</keyword>
<keyword id="KW-0479">Metal-binding</keyword>
<feature type="chain" id="PRO_0000387911" description="4-hydroxy-2-oxovalerate aldolase 1">
    <location>
        <begin position="1"/>
        <end position="351"/>
    </location>
</feature>
<feature type="domain" description="Pyruvate carboxyltransferase" evidence="1">
    <location>
        <begin position="4"/>
        <end position="258"/>
    </location>
</feature>
<feature type="active site" description="Proton acceptor" evidence="1">
    <location>
        <position position="16"/>
    </location>
</feature>
<feature type="binding site" evidence="1">
    <location>
        <begin position="12"/>
        <end position="13"/>
    </location>
    <ligand>
        <name>substrate</name>
    </ligand>
</feature>
<feature type="binding site" evidence="1">
    <location>
        <position position="13"/>
    </location>
    <ligand>
        <name>Mn(2+)</name>
        <dbReference type="ChEBI" id="CHEBI:29035"/>
    </ligand>
</feature>
<feature type="binding site" evidence="1">
    <location>
        <position position="166"/>
    </location>
    <ligand>
        <name>substrate</name>
    </ligand>
</feature>
<feature type="binding site" evidence="1">
    <location>
        <position position="195"/>
    </location>
    <ligand>
        <name>Mn(2+)</name>
        <dbReference type="ChEBI" id="CHEBI:29035"/>
    </ligand>
</feature>
<feature type="binding site" evidence="1">
    <location>
        <position position="195"/>
    </location>
    <ligand>
        <name>substrate</name>
    </ligand>
</feature>
<feature type="binding site" evidence="1">
    <location>
        <position position="197"/>
    </location>
    <ligand>
        <name>Mn(2+)</name>
        <dbReference type="ChEBI" id="CHEBI:29035"/>
    </ligand>
</feature>
<feature type="binding site" evidence="1">
    <location>
        <position position="300"/>
    </location>
    <ligand>
        <name>substrate</name>
    </ligand>
</feature>
<feature type="site" description="Transition state stabilizer" evidence="1">
    <location>
        <position position="12"/>
    </location>
</feature>
<gene>
    <name type="ordered locus">Sare_3900</name>
</gene>
<name>HOA1_SALAI</name>
<reference key="1">
    <citation type="submission" date="2007-10" db="EMBL/GenBank/DDBJ databases">
        <title>Complete sequence of Salinispora arenicola CNS-205.</title>
        <authorList>
            <consortium name="US DOE Joint Genome Institute"/>
            <person name="Copeland A."/>
            <person name="Lucas S."/>
            <person name="Lapidus A."/>
            <person name="Barry K."/>
            <person name="Glavina del Rio T."/>
            <person name="Dalin E."/>
            <person name="Tice H."/>
            <person name="Pitluck S."/>
            <person name="Foster B."/>
            <person name="Schmutz J."/>
            <person name="Larimer F."/>
            <person name="Land M."/>
            <person name="Hauser L."/>
            <person name="Kyrpides N."/>
            <person name="Ivanova N."/>
            <person name="Jensen P.R."/>
            <person name="Moore B.S."/>
            <person name="Penn K."/>
            <person name="Jenkins C."/>
            <person name="Udwary D."/>
            <person name="Xiang L."/>
            <person name="Gontang E."/>
            <person name="Richardson P."/>
        </authorList>
    </citation>
    <scope>NUCLEOTIDE SEQUENCE [LARGE SCALE GENOMIC DNA]</scope>
    <source>
        <strain>CNS-205</strain>
    </source>
</reference>
<organism>
    <name type="scientific">Salinispora arenicola (strain CNS-205)</name>
    <dbReference type="NCBI Taxonomy" id="391037"/>
    <lineage>
        <taxon>Bacteria</taxon>
        <taxon>Bacillati</taxon>
        <taxon>Actinomycetota</taxon>
        <taxon>Actinomycetes</taxon>
        <taxon>Micromonosporales</taxon>
        <taxon>Micromonosporaceae</taxon>
        <taxon>Salinispora</taxon>
    </lineage>
</organism>
<protein>
    <recommendedName>
        <fullName evidence="1">4-hydroxy-2-oxovalerate aldolase 1</fullName>
        <shortName evidence="1">HOA 1</shortName>
        <ecNumber evidence="1">4.1.3.39</ecNumber>
    </recommendedName>
    <alternativeName>
        <fullName evidence="1">4-hydroxy-2-keto-pentanoic acid aldolase 1</fullName>
    </alternativeName>
    <alternativeName>
        <fullName evidence="1">4-hydroxy-2-oxopentanoate aldolase 1</fullName>
    </alternativeName>
</protein>
<evidence type="ECO:0000255" key="1">
    <source>
        <dbReference type="HAMAP-Rule" id="MF_01656"/>
    </source>
</evidence>
<comment type="catalytic activity">
    <reaction evidence="1">
        <text>(S)-4-hydroxy-2-oxopentanoate = acetaldehyde + pyruvate</text>
        <dbReference type="Rhea" id="RHEA:22624"/>
        <dbReference type="ChEBI" id="CHEBI:15343"/>
        <dbReference type="ChEBI" id="CHEBI:15361"/>
        <dbReference type="ChEBI" id="CHEBI:73143"/>
        <dbReference type="EC" id="4.1.3.39"/>
    </reaction>
</comment>
<comment type="similarity">
    <text evidence="1">Belongs to the 4-hydroxy-2-oxovalerate aldolase family.</text>
</comment>
<proteinExistence type="inferred from homology"/>
<accession>A8M1N0</accession>